<name>YHAM_ECO57</name>
<keyword id="KW-1185">Reference proteome</keyword>
<feature type="chain" id="PRO_0000339821" description="UPF0597 protein YhaM">
    <location>
        <begin position="1"/>
        <end position="436"/>
    </location>
</feature>
<accession>Q8XAF6</accession>
<accession>Q7AAM1</accession>
<comment type="function">
    <text evidence="2">Thought to be a D-serine dehydratase, however it does not complement a dsdA (D-serine dehydratase) mutant in strain CFT073, suggesting it may not have that function (PubMed:26727373).</text>
</comment>
<comment type="induction">
    <text evidence="2">40-fold induced under conditions that maximally induce expression of the large pathogenicity island (PAI) also called the locus of effacement (LEE); part of the dlsT-yhaM operon. Slightly induced by D-serine.</text>
</comment>
<comment type="disruption phenotype">
    <text evidence="2">No effect on protein secretion by the type III secretion system (T3SS) encoded in the locus of effacement (LEE).</text>
</comment>
<comment type="similarity">
    <text evidence="1">Belongs to the UPF0597 family.</text>
</comment>
<protein>
    <recommendedName>
        <fullName evidence="1">UPF0597 protein YhaM</fullName>
    </recommendedName>
</protein>
<organism>
    <name type="scientific">Escherichia coli O157:H7</name>
    <dbReference type="NCBI Taxonomy" id="83334"/>
    <lineage>
        <taxon>Bacteria</taxon>
        <taxon>Pseudomonadati</taxon>
        <taxon>Pseudomonadota</taxon>
        <taxon>Gammaproteobacteria</taxon>
        <taxon>Enterobacterales</taxon>
        <taxon>Enterobacteriaceae</taxon>
        <taxon>Escherichia</taxon>
    </lineage>
</organism>
<reference key="1">
    <citation type="journal article" date="2001" name="Nature">
        <title>Genome sequence of enterohaemorrhagic Escherichia coli O157:H7.</title>
        <authorList>
            <person name="Perna N.T."/>
            <person name="Plunkett G. III"/>
            <person name="Burland V."/>
            <person name="Mau B."/>
            <person name="Glasner J.D."/>
            <person name="Rose D.J."/>
            <person name="Mayhew G.F."/>
            <person name="Evans P.S."/>
            <person name="Gregor J."/>
            <person name="Kirkpatrick H.A."/>
            <person name="Posfai G."/>
            <person name="Hackett J."/>
            <person name="Klink S."/>
            <person name="Boutin A."/>
            <person name="Shao Y."/>
            <person name="Miller L."/>
            <person name="Grotbeck E.J."/>
            <person name="Davis N.W."/>
            <person name="Lim A."/>
            <person name="Dimalanta E.T."/>
            <person name="Potamousis K."/>
            <person name="Apodaca J."/>
            <person name="Anantharaman T.S."/>
            <person name="Lin J."/>
            <person name="Yen G."/>
            <person name="Schwartz D.C."/>
            <person name="Welch R.A."/>
            <person name="Blattner F.R."/>
        </authorList>
    </citation>
    <scope>NUCLEOTIDE SEQUENCE [LARGE SCALE GENOMIC DNA]</scope>
    <source>
        <strain>O157:H7 / EDL933 / ATCC 700927 / EHEC</strain>
    </source>
</reference>
<reference key="2">
    <citation type="journal article" date="2001" name="DNA Res.">
        <title>Complete genome sequence of enterohemorrhagic Escherichia coli O157:H7 and genomic comparison with a laboratory strain K-12.</title>
        <authorList>
            <person name="Hayashi T."/>
            <person name="Makino K."/>
            <person name="Ohnishi M."/>
            <person name="Kurokawa K."/>
            <person name="Ishii K."/>
            <person name="Yokoyama K."/>
            <person name="Han C.-G."/>
            <person name="Ohtsubo E."/>
            <person name="Nakayama K."/>
            <person name="Murata T."/>
            <person name="Tanaka M."/>
            <person name="Tobe T."/>
            <person name="Iida T."/>
            <person name="Takami H."/>
            <person name="Honda T."/>
            <person name="Sasakawa C."/>
            <person name="Ogasawara N."/>
            <person name="Yasunaga T."/>
            <person name="Kuhara S."/>
            <person name="Shiba T."/>
            <person name="Hattori M."/>
            <person name="Shinagawa H."/>
        </authorList>
    </citation>
    <scope>NUCLEOTIDE SEQUENCE [LARGE SCALE GENOMIC DNA]</scope>
    <source>
        <strain>O157:H7 / Sakai / RIMD 0509952 / EHEC</strain>
    </source>
</reference>
<reference key="3">
    <citation type="journal article" date="2016" name="PLoS Pathog.">
        <title>A highly conserved bacterial D-serine uptake system links host metabolism and virulence.</title>
        <authorList>
            <person name="Connolly J.P."/>
            <person name="Gabrielsen M."/>
            <person name="Goldstone R.J."/>
            <person name="Grinter R."/>
            <person name="Wang D."/>
            <person name="Cogdell R.J."/>
            <person name="Walker D."/>
            <person name="Smith D.G."/>
            <person name="Roe A.J."/>
        </authorList>
    </citation>
    <scope>FUNCTION</scope>
    <scope>INDUCTION</scope>
    <scope>DISRUPTION PHENOTYPE</scope>
    <source>
        <strain>O157:H7 / EDL933 / ATCC 700927 / EHEC</strain>
    </source>
</reference>
<gene>
    <name evidence="1" type="primary">yhaM</name>
    <name type="ordered locus">Z4462</name>
    <name type="ordered locus">ECs3990</name>
</gene>
<proteinExistence type="evidence at transcript level"/>
<sequence>MFDSTLNPLWQRYILAVQEEVKPALGCTEPISLALAAAVAAAELEGPVERVEAWVSPNLMKNGLGVTVPGTGMVGLPIAAALGALGGNANAGLEVLKDATAQAIADAKALLAAGKVSVKIQEPCNEILFSRAKVWNGEKWACVTIVGGHTNIVHIETHDGVVFTQQACVAEGEQESPLSVLSRTTLAEILKFVNEVPFAAIRFILDSAKLNCALSQEGLSGKWGLHIGATLEKQCERGLLAKDLSSSIVIRTSAASDARMGGATLPAMSNSGSGNQGITATMPVVVVAEHFGADDERLARALMLSHLSAIYIHNQLPRLSALCAATTAAMGAAAGMAWLVDGRYETISMAISSMIGDVSGMICDGASNSCAMKVSTSASAAWKAVLMALDDTAVTGNEGIVAHDVEQSIANLCALASHSMQQTDRQIIEIMASKAR</sequence>
<evidence type="ECO:0000255" key="1">
    <source>
        <dbReference type="HAMAP-Rule" id="MF_01845"/>
    </source>
</evidence>
<evidence type="ECO:0000269" key="2">
    <source>
    </source>
</evidence>
<dbReference type="EMBL" id="AE005174">
    <property type="protein sequence ID" value="AAG58241.1"/>
    <property type="molecule type" value="Genomic_DNA"/>
</dbReference>
<dbReference type="EMBL" id="BA000007">
    <property type="protein sequence ID" value="BAB37413.1"/>
    <property type="molecule type" value="Genomic_DNA"/>
</dbReference>
<dbReference type="PIR" id="E85972">
    <property type="entry name" value="E85972"/>
</dbReference>
<dbReference type="PIR" id="F91127">
    <property type="entry name" value="F91127"/>
</dbReference>
<dbReference type="RefSeq" id="NP_312017.1">
    <property type="nucleotide sequence ID" value="NC_002695.1"/>
</dbReference>
<dbReference type="SMR" id="Q8XAF6"/>
<dbReference type="STRING" id="155864.Z4462"/>
<dbReference type="GeneID" id="916164"/>
<dbReference type="KEGG" id="ece:Z4462"/>
<dbReference type="KEGG" id="ecs:ECs_3990"/>
<dbReference type="PATRIC" id="fig|386585.9.peg.4164"/>
<dbReference type="eggNOG" id="COG3681">
    <property type="taxonomic scope" value="Bacteria"/>
</dbReference>
<dbReference type="HOGENOM" id="CLU_051840_0_0_6"/>
<dbReference type="OMA" id="MIPVMSN"/>
<dbReference type="Proteomes" id="UP000000558">
    <property type="component" value="Chromosome"/>
</dbReference>
<dbReference type="Proteomes" id="UP000002519">
    <property type="component" value="Chromosome"/>
</dbReference>
<dbReference type="GO" id="GO:0080146">
    <property type="term" value="F:L-cysteine desulfhydrase activity"/>
    <property type="evidence" value="ECO:0007669"/>
    <property type="project" value="TreeGrafter"/>
</dbReference>
<dbReference type="GO" id="GO:0019450">
    <property type="term" value="P:L-cysteine catabolic process to pyruvate"/>
    <property type="evidence" value="ECO:0007669"/>
    <property type="project" value="TreeGrafter"/>
</dbReference>
<dbReference type="HAMAP" id="MF_01845">
    <property type="entry name" value="UPF0597"/>
    <property type="match status" value="1"/>
</dbReference>
<dbReference type="InterPro" id="IPR005130">
    <property type="entry name" value="Ser_deHydtase-like_asu"/>
</dbReference>
<dbReference type="InterPro" id="IPR021144">
    <property type="entry name" value="UPF0597"/>
</dbReference>
<dbReference type="PANTHER" id="PTHR30501">
    <property type="entry name" value="UPF0597 PROTEIN YHAM"/>
    <property type="match status" value="1"/>
</dbReference>
<dbReference type="PANTHER" id="PTHR30501:SF2">
    <property type="entry name" value="UPF0597 PROTEIN YHAM"/>
    <property type="match status" value="1"/>
</dbReference>
<dbReference type="Pfam" id="PF03313">
    <property type="entry name" value="SDH_alpha"/>
    <property type="match status" value="1"/>
</dbReference>
<dbReference type="PIRSF" id="PIRSF006054">
    <property type="entry name" value="UCP006054"/>
    <property type="match status" value="1"/>
</dbReference>